<name>RL25_ALKEH</name>
<sequence>MSAIEMKLDAELRTETGRGASRRLRRAKRVPAIMYGGHQEPQAITLNLLQLDRLMQEEAFYSQILTVNLDGKSEQVIVKDLQRHPFKPLVEHVDLQRVVAGEKVHTSVPVHFVNEDKAPGIKAGGIIHHDLNEIEIACLPKDLPEYLEVDVSALELGSAIHLSDVPLPAGVEIPELVQGADHDHPVVSIHASRKAKADEDEAAEGEEGEEGAED</sequence>
<gene>
    <name evidence="1" type="primary">rplY</name>
    <name evidence="1" type="synonym">ctc</name>
    <name type="ordered locus">Mlg_0284</name>
</gene>
<comment type="function">
    <text evidence="1">This is one of the proteins that binds to the 5S RNA in the ribosome where it forms part of the central protuberance.</text>
</comment>
<comment type="subunit">
    <text evidence="1">Part of the 50S ribosomal subunit; part of the 5S rRNA/L5/L18/L25 subcomplex. Contacts the 5S rRNA. Binds to the 5S rRNA independently of L5 and L18.</text>
</comment>
<comment type="similarity">
    <text evidence="1">Belongs to the bacterial ribosomal protein bL25 family. CTC subfamily.</text>
</comment>
<protein>
    <recommendedName>
        <fullName evidence="1">Large ribosomal subunit protein bL25</fullName>
    </recommendedName>
    <alternativeName>
        <fullName evidence="3">50S ribosomal protein L25</fullName>
    </alternativeName>
    <alternativeName>
        <fullName evidence="1">General stress protein CTC</fullName>
    </alternativeName>
</protein>
<evidence type="ECO:0000255" key="1">
    <source>
        <dbReference type="HAMAP-Rule" id="MF_01334"/>
    </source>
</evidence>
<evidence type="ECO:0000256" key="2">
    <source>
        <dbReference type="SAM" id="MobiDB-lite"/>
    </source>
</evidence>
<evidence type="ECO:0000305" key="3"/>
<dbReference type="EMBL" id="CP000453">
    <property type="protein sequence ID" value="ABI55639.1"/>
    <property type="molecule type" value="Genomic_DNA"/>
</dbReference>
<dbReference type="RefSeq" id="WP_011628035.1">
    <property type="nucleotide sequence ID" value="NC_008340.1"/>
</dbReference>
<dbReference type="SMR" id="Q0ABZ8"/>
<dbReference type="KEGG" id="aeh:Mlg_0284"/>
<dbReference type="eggNOG" id="COG1825">
    <property type="taxonomic scope" value="Bacteria"/>
</dbReference>
<dbReference type="HOGENOM" id="CLU_075939_0_1_6"/>
<dbReference type="OrthoDB" id="9806411at2"/>
<dbReference type="Proteomes" id="UP000001962">
    <property type="component" value="Chromosome"/>
</dbReference>
<dbReference type="GO" id="GO:0022625">
    <property type="term" value="C:cytosolic large ribosomal subunit"/>
    <property type="evidence" value="ECO:0007669"/>
    <property type="project" value="TreeGrafter"/>
</dbReference>
<dbReference type="GO" id="GO:0008097">
    <property type="term" value="F:5S rRNA binding"/>
    <property type="evidence" value="ECO:0007669"/>
    <property type="project" value="InterPro"/>
</dbReference>
<dbReference type="GO" id="GO:0003735">
    <property type="term" value="F:structural constituent of ribosome"/>
    <property type="evidence" value="ECO:0007669"/>
    <property type="project" value="InterPro"/>
</dbReference>
<dbReference type="GO" id="GO:0006412">
    <property type="term" value="P:translation"/>
    <property type="evidence" value="ECO:0007669"/>
    <property type="project" value="UniProtKB-UniRule"/>
</dbReference>
<dbReference type="CDD" id="cd00495">
    <property type="entry name" value="Ribosomal_L25_TL5_CTC"/>
    <property type="match status" value="1"/>
</dbReference>
<dbReference type="FunFam" id="2.40.240.10:FF:000002">
    <property type="entry name" value="50S ribosomal protein L25"/>
    <property type="match status" value="1"/>
</dbReference>
<dbReference type="Gene3D" id="2.170.120.20">
    <property type="entry name" value="Ribosomal protein L25, beta domain"/>
    <property type="match status" value="1"/>
</dbReference>
<dbReference type="Gene3D" id="2.40.240.10">
    <property type="entry name" value="Ribosomal Protein L25, Chain P"/>
    <property type="match status" value="1"/>
</dbReference>
<dbReference type="HAMAP" id="MF_01336">
    <property type="entry name" value="Ribosomal_bL25"/>
    <property type="match status" value="1"/>
</dbReference>
<dbReference type="HAMAP" id="MF_01334">
    <property type="entry name" value="Ribosomal_bL25_CTC"/>
    <property type="match status" value="1"/>
</dbReference>
<dbReference type="InterPro" id="IPR020056">
    <property type="entry name" value="Rbsml_bL25/Gln-tRNA_synth_N"/>
</dbReference>
<dbReference type="InterPro" id="IPR011035">
    <property type="entry name" value="Ribosomal_bL25/Gln-tRNA_synth"/>
</dbReference>
<dbReference type="InterPro" id="IPR020057">
    <property type="entry name" value="Ribosomal_bL25_b-dom"/>
</dbReference>
<dbReference type="InterPro" id="IPR037121">
    <property type="entry name" value="Ribosomal_bL25_C"/>
</dbReference>
<dbReference type="InterPro" id="IPR001021">
    <property type="entry name" value="Ribosomal_bL25_long"/>
</dbReference>
<dbReference type="InterPro" id="IPR020055">
    <property type="entry name" value="Ribosomal_bL25_short"/>
</dbReference>
<dbReference type="InterPro" id="IPR029751">
    <property type="entry name" value="Ribosomal_L25_dom"/>
</dbReference>
<dbReference type="InterPro" id="IPR020930">
    <property type="entry name" value="Ribosomal_uL5_bac-type"/>
</dbReference>
<dbReference type="NCBIfam" id="TIGR00731">
    <property type="entry name" value="bL25_bact_ctc"/>
    <property type="match status" value="1"/>
</dbReference>
<dbReference type="NCBIfam" id="NF004128">
    <property type="entry name" value="PRK05618.1-2"/>
    <property type="match status" value="1"/>
</dbReference>
<dbReference type="NCBIfam" id="NF004130">
    <property type="entry name" value="PRK05618.1-5"/>
    <property type="match status" value="1"/>
</dbReference>
<dbReference type="NCBIfam" id="NF004612">
    <property type="entry name" value="PRK05943.1"/>
    <property type="match status" value="1"/>
</dbReference>
<dbReference type="PANTHER" id="PTHR33284">
    <property type="entry name" value="RIBOSOMAL PROTEIN L25/GLN-TRNA SYNTHETASE, ANTI-CODON-BINDING DOMAIN-CONTAINING PROTEIN"/>
    <property type="match status" value="1"/>
</dbReference>
<dbReference type="PANTHER" id="PTHR33284:SF1">
    <property type="entry name" value="RIBOSOMAL PROTEIN L25_GLN-TRNA SYNTHETASE, ANTI-CODON-BINDING DOMAIN-CONTAINING PROTEIN"/>
    <property type="match status" value="1"/>
</dbReference>
<dbReference type="Pfam" id="PF01386">
    <property type="entry name" value="Ribosomal_L25p"/>
    <property type="match status" value="1"/>
</dbReference>
<dbReference type="Pfam" id="PF14693">
    <property type="entry name" value="Ribosomal_TL5_C"/>
    <property type="match status" value="1"/>
</dbReference>
<dbReference type="SUPFAM" id="SSF50715">
    <property type="entry name" value="Ribosomal protein L25-like"/>
    <property type="match status" value="1"/>
</dbReference>
<feature type="chain" id="PRO_1000086616" description="Large ribosomal subunit protein bL25">
    <location>
        <begin position="1"/>
        <end position="214"/>
    </location>
</feature>
<feature type="region of interest" description="Disordered" evidence="2">
    <location>
        <begin position="189"/>
        <end position="214"/>
    </location>
</feature>
<feature type="compositionally biased region" description="Acidic residues" evidence="2">
    <location>
        <begin position="198"/>
        <end position="214"/>
    </location>
</feature>
<accession>Q0ABZ8</accession>
<reference key="1">
    <citation type="submission" date="2006-08" db="EMBL/GenBank/DDBJ databases">
        <title>Complete sequence of Alkalilimnicola ehrilichei MLHE-1.</title>
        <authorList>
            <person name="Copeland A."/>
            <person name="Lucas S."/>
            <person name="Lapidus A."/>
            <person name="Barry K."/>
            <person name="Detter J.C."/>
            <person name="Glavina del Rio T."/>
            <person name="Hammon N."/>
            <person name="Israni S."/>
            <person name="Dalin E."/>
            <person name="Tice H."/>
            <person name="Pitluck S."/>
            <person name="Sims D."/>
            <person name="Brettin T."/>
            <person name="Bruce D."/>
            <person name="Han C."/>
            <person name="Tapia R."/>
            <person name="Gilna P."/>
            <person name="Schmutz J."/>
            <person name="Larimer F."/>
            <person name="Land M."/>
            <person name="Hauser L."/>
            <person name="Kyrpides N."/>
            <person name="Mikhailova N."/>
            <person name="Oremland R.S."/>
            <person name="Hoeft S.E."/>
            <person name="Switzer-Blum J."/>
            <person name="Kulp T."/>
            <person name="King G."/>
            <person name="Tabita R."/>
            <person name="Witte B."/>
            <person name="Santini J.M."/>
            <person name="Basu P."/>
            <person name="Hollibaugh J.T."/>
            <person name="Xie G."/>
            <person name="Stolz J.F."/>
            <person name="Richardson P."/>
        </authorList>
    </citation>
    <scope>NUCLEOTIDE SEQUENCE [LARGE SCALE GENOMIC DNA]</scope>
    <source>
        <strain>ATCC BAA-1101 / DSM 17681 / MLHE-1</strain>
    </source>
</reference>
<proteinExistence type="inferred from homology"/>
<organism>
    <name type="scientific">Alkalilimnicola ehrlichii (strain ATCC BAA-1101 / DSM 17681 / MLHE-1)</name>
    <dbReference type="NCBI Taxonomy" id="187272"/>
    <lineage>
        <taxon>Bacteria</taxon>
        <taxon>Pseudomonadati</taxon>
        <taxon>Pseudomonadota</taxon>
        <taxon>Gammaproteobacteria</taxon>
        <taxon>Chromatiales</taxon>
        <taxon>Ectothiorhodospiraceae</taxon>
        <taxon>Alkalilimnicola</taxon>
    </lineage>
</organism>
<keyword id="KW-1185">Reference proteome</keyword>
<keyword id="KW-0687">Ribonucleoprotein</keyword>
<keyword id="KW-0689">Ribosomal protein</keyword>
<keyword id="KW-0694">RNA-binding</keyword>
<keyword id="KW-0699">rRNA-binding</keyword>